<gene>
    <name evidence="10" type="primary">Gabrr1</name>
</gene>
<evidence type="ECO:0000250" key="1">
    <source>
        <dbReference type="UniProtKB" id="P24046"/>
    </source>
</evidence>
<evidence type="ECO:0000250" key="2">
    <source>
        <dbReference type="UniProtKB" id="P50572"/>
    </source>
</evidence>
<evidence type="ECO:0000255" key="3"/>
<evidence type="ECO:0000256" key="4">
    <source>
        <dbReference type="SAM" id="MobiDB-lite"/>
    </source>
</evidence>
<evidence type="ECO:0000269" key="5">
    <source>
    </source>
</evidence>
<evidence type="ECO:0000269" key="6">
    <source>
    </source>
</evidence>
<evidence type="ECO:0000303" key="7">
    <source>
    </source>
</evidence>
<evidence type="ECO:0000305" key="8"/>
<evidence type="ECO:0000305" key="9">
    <source>
    </source>
</evidence>
<evidence type="ECO:0000312" key="10">
    <source>
        <dbReference type="MGI" id="MGI:95625"/>
    </source>
</evidence>
<comment type="function">
    <text evidence="1 5 6">Rho subunit of the pentameric ligand-gated chloride channels responsible for mediating the effects of gamma-aminobutyric acid (GABA), the major inhibitory neurotransmitter in the brain. Rho-containing GABA-gated chloride channels are a subclass of GABA(A) receptors (GABAARs) entirely composed of rho subunits, where GABA molecules bind at the rho intersubunit interfaces. When activated by GABA, rho-GABAARs selectively allow the flow of chloride anions across the cell membrane down their electrochemical gradient. Rho-1 subunits are primarily expressed in retina where rho-1-containing GABAARs play a role in retinal neurotransmission (By similarity). Rho-1 GABAARs are also involved in neuronal tonic (extrasynaptic) and phasic (synaptic) transmission in the Purkinje neurons of the cerebellum (PubMed:16945976). Rho-1 GABAARs may also contribute to the regulation of glial development in the cerebellum by controlling extrasynaptic transmission (PubMed:25422464).</text>
</comment>
<comment type="catalytic activity">
    <reaction evidence="1">
        <text>chloride(in) = chloride(out)</text>
        <dbReference type="Rhea" id="RHEA:29823"/>
        <dbReference type="ChEBI" id="CHEBI:17996"/>
    </reaction>
</comment>
<comment type="activity regulation">
    <text evidence="6">Inhibited by TPMPA, a rho-specific antagonist, when forming a homopentamer (PubMed:25422464). In contrast with other GABAARs, rho-1 GABAAR is not inhibited by bicuculline when forming a homopentamer (PubMed:25422464).</text>
</comment>
<comment type="subunit">
    <text evidence="2 6">Three rho subunits (rho-1/GBRR1, rho-2/GBRR2 and rho-3/GBRR3) coassemble either to form functional homopentamers or heteropentamers (PubMed:25422464). Rho-1/GBRR1 subunits can also associate with alpha-1/GBRA1 subunits to form a functional GABAAR (PubMed:25422464). Interacts with SQSTM1 (By similarity).</text>
</comment>
<comment type="subcellular location">
    <subcellularLocation>
        <location evidence="9">Postsynaptic cell membrane</location>
        <topology evidence="1">Multi-pass membrane protein</topology>
    </subcellularLocation>
    <subcellularLocation>
        <location evidence="6">Cell membrane</location>
        <topology evidence="1">Multi-pass membrane protein</topology>
    </subcellularLocation>
    <text evidence="6">Located at the plasma membrane of astrocytes (PubMed:25422464). Located in the plasma membrane of glial cell processes (PubMed:25422464).</text>
</comment>
<comment type="tissue specificity">
    <text evidence="5 6">Expressed in the cerebellum.</text>
</comment>
<comment type="developmental stage">
    <text evidence="6">Expressed during early postnatal development of cerebellar ependymal glial cells. The expression is down-regulated in young mice, but limited to Purkinje neurons and a small fraction of glial cells in adults.</text>
</comment>
<comment type="domain">
    <text evidence="1">GABAARs subunits share a common topological structure: a peptide sequence made up of a long extracellular N-terminal, four transmembrane domains, intracellular or cytoplasmic domain located between the third and the fourth transmembrane domains.</text>
</comment>
<comment type="similarity">
    <text evidence="8">Belongs to the ligand-gated ion channel (TC 1.A.9) family. Gamma-aminobutyric acid receptor (TC 1.A.9.5) subfamily. GABRR1 sub-subfamily.</text>
</comment>
<comment type="sequence caution" evidence="8">
    <conflict type="erroneous initiation">
        <sequence resource="EMBL-CDS" id="AAB81964"/>
    </conflict>
</comment>
<comment type="sequence caution" evidence="8">
    <conflict type="erroneous initiation">
        <sequence resource="EMBL-CDS" id="CAM45896"/>
    </conflict>
</comment>
<name>GBRR1_MOUSE</name>
<organism>
    <name type="scientific">Mus musculus</name>
    <name type="common">Mouse</name>
    <dbReference type="NCBI Taxonomy" id="10090"/>
    <lineage>
        <taxon>Eukaryota</taxon>
        <taxon>Metazoa</taxon>
        <taxon>Chordata</taxon>
        <taxon>Craniata</taxon>
        <taxon>Vertebrata</taxon>
        <taxon>Euteleostomi</taxon>
        <taxon>Mammalia</taxon>
        <taxon>Eutheria</taxon>
        <taxon>Euarchontoglires</taxon>
        <taxon>Glires</taxon>
        <taxon>Rodentia</taxon>
        <taxon>Myomorpha</taxon>
        <taxon>Muroidea</taxon>
        <taxon>Muridae</taxon>
        <taxon>Murinae</taxon>
        <taxon>Mus</taxon>
        <taxon>Mus</taxon>
    </lineage>
</organism>
<accession>P56475</accession>
<accession>A3KG51</accession>
<keyword id="KW-1003">Cell membrane</keyword>
<keyword id="KW-0868">Chloride</keyword>
<keyword id="KW-0869">Chloride channel</keyword>
<keyword id="KW-1015">Disulfide bond</keyword>
<keyword id="KW-0325">Glycoprotein</keyword>
<keyword id="KW-0407">Ion channel</keyword>
<keyword id="KW-0406">Ion transport</keyword>
<keyword id="KW-0472">Membrane</keyword>
<keyword id="KW-0628">Postsynaptic cell membrane</keyword>
<keyword id="KW-1185">Reference proteome</keyword>
<keyword id="KW-0732">Signal</keyword>
<keyword id="KW-0770">Synapse</keyword>
<keyword id="KW-0812">Transmembrane</keyword>
<keyword id="KW-1133">Transmembrane helix</keyword>
<keyword id="KW-0813">Transport</keyword>
<proteinExistence type="evidence at protein level"/>
<sequence>MLAVQNMKFGIFLLWWGWVLAAESTAHWPGREVHEPSRKGSRPQRQRRGAHDDAHKQGSPILRRSSDITKSPLTKSEQLLRIDDHDFSMRPGFGGPAIPVGVDVQVESLDSISEVDMDFTMTLYLRHYWKDERLSFPSSNNLSMTFDGRLVKKIWVPDMFFVHSKRSFIHDTTTDNVMLRVQPDGKVLYSLRVTVTAMCNMDFSRFPLDTQTCSLEIESYAYTEDDLMLYWKKGNDSLKTDERISLSQFLIQEFHTTTKLAFYSSTGWYNRLYINFTLRRHIFFFLLQTYFPATLMVMLSWVSFWIDRRAVPARVPLGITTVLTMSTIITGVNASMPRVSYIKAVDIYLWVSFVFVFLSVLEYAAVNYLTTVQERKERKLREKISCTCGLPQPRGVMLDSSYSDGEVNDLGGYMPENGEKPDRMMVQLTLASERGSPQRKGQRGSYVSMRINTHAIDKYSRIIFPAAYILFNLIYWSIFS</sequence>
<reference key="1">
    <citation type="journal article" date="1997" name="Abstr. - Soc. Neurosci.">
        <title>Molecular cloning of GABA rho subunits in the mouse retina.</title>
        <authorList>
            <person name="Greka A."/>
            <person name="Koolen J.A."/>
            <person name="Lipton S.A."/>
            <person name="Zhang D."/>
        </authorList>
    </citation>
    <scope>NUCLEOTIDE SEQUENCE [MRNA]</scope>
    <source>
        <tissue>Retina</tissue>
    </source>
</reference>
<reference key="2">
    <citation type="journal article" date="2009" name="PLoS Biol.">
        <title>Lineage-specific biology revealed by a finished genome assembly of the mouse.</title>
        <authorList>
            <person name="Church D.M."/>
            <person name="Goodstadt L."/>
            <person name="Hillier L.W."/>
            <person name="Zody M.C."/>
            <person name="Goldstein S."/>
            <person name="She X."/>
            <person name="Bult C.J."/>
            <person name="Agarwala R."/>
            <person name="Cherry J.L."/>
            <person name="DiCuccio M."/>
            <person name="Hlavina W."/>
            <person name="Kapustin Y."/>
            <person name="Meric P."/>
            <person name="Maglott D."/>
            <person name="Birtle Z."/>
            <person name="Marques A.C."/>
            <person name="Graves T."/>
            <person name="Zhou S."/>
            <person name="Teague B."/>
            <person name="Potamousis K."/>
            <person name="Churas C."/>
            <person name="Place M."/>
            <person name="Herschleb J."/>
            <person name="Runnheim R."/>
            <person name="Forrest D."/>
            <person name="Amos-Landgraf J."/>
            <person name="Schwartz D.C."/>
            <person name="Cheng Z."/>
            <person name="Lindblad-Toh K."/>
            <person name="Eichler E.E."/>
            <person name="Ponting C.P."/>
        </authorList>
    </citation>
    <scope>NUCLEOTIDE SEQUENCE [LARGE SCALE GENOMIC DNA]</scope>
    <source>
        <strain>C57BL/6J</strain>
    </source>
</reference>
<reference key="3">
    <citation type="journal article" date="2006" name="J. Physiol. (Lond.)">
        <title>Evidence that GABA rho subunits contribute to functional ionotropic GABA receptors in mouse cerebellar Purkinje cells.</title>
        <authorList>
            <person name="Harvey V.L."/>
            <person name="Duguid I.C."/>
            <person name="Krasel C."/>
            <person name="Stephens G.J."/>
        </authorList>
    </citation>
    <scope>FUNCTION</scope>
    <scope>TISSUE SPECIFICITY</scope>
</reference>
<reference key="4">
    <citation type="journal article" date="2014" name="Proc. Natl. Acad. Sci. U.S.A.">
        <title>GABArho subunits confer a bicuculline-insensitive component to GFAP+ cells of cerebellum.</title>
        <authorList>
            <person name="Petriz A."/>
            <person name="Reyes-Haro D."/>
            <person name="Gonzalez-Gonzalez M.A."/>
            <person name="Miledi R."/>
            <person name="Martinez-Torres A."/>
        </authorList>
    </citation>
    <scope>FUNCTION</scope>
    <scope>INTERACTION WITH GBRR2 AND GBRA1</scope>
    <scope>SUBCELLULAR LOCATION</scope>
    <scope>TISSUE SPECIFICITY</scope>
    <scope>DEVELOPMENTAL STAGE</scope>
</reference>
<dbReference type="EMBL" id="AF024620">
    <property type="protein sequence ID" value="AAB81964.1"/>
    <property type="status" value="ALT_INIT"/>
    <property type="molecule type" value="mRNA"/>
</dbReference>
<dbReference type="EMBL" id="AL670464">
    <property type="protein sequence ID" value="CAM45896.1"/>
    <property type="status" value="ALT_INIT"/>
    <property type="molecule type" value="Genomic_DNA"/>
</dbReference>
<dbReference type="CCDS" id="CCDS18021.2"/>
<dbReference type="RefSeq" id="NP_032101.3">
    <property type="nucleotide sequence ID" value="NM_008075.2"/>
</dbReference>
<dbReference type="SMR" id="P56475"/>
<dbReference type="FunCoup" id="P56475">
    <property type="interactions" value="437"/>
</dbReference>
<dbReference type="STRING" id="10090.ENSMUSP00000029947"/>
<dbReference type="GlyCosmos" id="P56475">
    <property type="glycosylation" value="3 sites, No reported glycans"/>
</dbReference>
<dbReference type="GlyGen" id="P56475">
    <property type="glycosylation" value="3 sites"/>
</dbReference>
<dbReference type="iPTMnet" id="P56475"/>
<dbReference type="PhosphoSitePlus" id="P56475"/>
<dbReference type="PaxDb" id="10090-ENSMUSP00000029947"/>
<dbReference type="ProteomicsDB" id="268854"/>
<dbReference type="Antibodypedia" id="31856">
    <property type="antibodies" value="225 antibodies from 24 providers"/>
</dbReference>
<dbReference type="DNASU" id="14408"/>
<dbReference type="Ensembl" id="ENSMUST00000029947.6">
    <property type="protein sequence ID" value="ENSMUSP00000029947.7"/>
    <property type="gene ID" value="ENSMUSG00000028280.10"/>
</dbReference>
<dbReference type="GeneID" id="14408"/>
<dbReference type="KEGG" id="mmu:14408"/>
<dbReference type="UCSC" id="uc008sfr.2">
    <property type="organism name" value="mouse"/>
</dbReference>
<dbReference type="AGR" id="MGI:95625"/>
<dbReference type="CTD" id="2569"/>
<dbReference type="MGI" id="MGI:95625">
    <property type="gene designation" value="Gabrr1"/>
</dbReference>
<dbReference type="VEuPathDB" id="HostDB:ENSMUSG00000028280"/>
<dbReference type="eggNOG" id="KOG3643">
    <property type="taxonomic scope" value="Eukaryota"/>
</dbReference>
<dbReference type="GeneTree" id="ENSGT00940000158591"/>
<dbReference type="HOGENOM" id="CLU_010920_0_1_1"/>
<dbReference type="InParanoid" id="P56475"/>
<dbReference type="OMA" id="WGWVWAT"/>
<dbReference type="OrthoDB" id="442503at2759"/>
<dbReference type="PhylomeDB" id="P56475"/>
<dbReference type="TreeFam" id="TF315453"/>
<dbReference type="Reactome" id="R-MMU-977443">
    <property type="pathway name" value="GABA receptor activation"/>
</dbReference>
<dbReference type="BioGRID-ORCS" id="14408">
    <property type="hits" value="2 hits in 75 CRISPR screens"/>
</dbReference>
<dbReference type="PRO" id="PR:P56475"/>
<dbReference type="Proteomes" id="UP000000589">
    <property type="component" value="Chromosome 4"/>
</dbReference>
<dbReference type="RNAct" id="P56475">
    <property type="molecule type" value="protein"/>
</dbReference>
<dbReference type="Bgee" id="ENSMUSG00000028280">
    <property type="expression patterns" value="Expressed in retinal neural layer and 5 other cell types or tissues"/>
</dbReference>
<dbReference type="GO" id="GO:0034707">
    <property type="term" value="C:chloride channel complex"/>
    <property type="evidence" value="ECO:0007669"/>
    <property type="project" value="UniProtKB-KW"/>
</dbReference>
<dbReference type="GO" id="GO:0098982">
    <property type="term" value="C:GABA-ergic synapse"/>
    <property type="evidence" value="ECO:0000314"/>
    <property type="project" value="SynGO"/>
</dbReference>
<dbReference type="GO" id="GO:0098978">
    <property type="term" value="C:glutamatergic synapse"/>
    <property type="evidence" value="ECO:0000314"/>
    <property type="project" value="SynGO"/>
</dbReference>
<dbReference type="GO" id="GO:0097708">
    <property type="term" value="C:intracellular vesicle"/>
    <property type="evidence" value="ECO:0000314"/>
    <property type="project" value="MGI"/>
</dbReference>
<dbReference type="GO" id="GO:0005886">
    <property type="term" value="C:plasma membrane"/>
    <property type="evidence" value="ECO:0000314"/>
    <property type="project" value="UniProtKB"/>
</dbReference>
<dbReference type="GO" id="GO:0045211">
    <property type="term" value="C:postsynaptic membrane"/>
    <property type="evidence" value="ECO:0007669"/>
    <property type="project" value="UniProtKB-SubCell"/>
</dbReference>
<dbReference type="GO" id="GO:0042734">
    <property type="term" value="C:presynaptic membrane"/>
    <property type="evidence" value="ECO:0000314"/>
    <property type="project" value="SynGO"/>
</dbReference>
<dbReference type="GO" id="GO:0004890">
    <property type="term" value="F:GABA-A receptor activity"/>
    <property type="evidence" value="ECO:0000250"/>
    <property type="project" value="UniProtKB"/>
</dbReference>
<dbReference type="GO" id="GO:0022851">
    <property type="term" value="F:GABA-gated chloride ion channel activity"/>
    <property type="evidence" value="ECO:0000250"/>
    <property type="project" value="UniProtKB"/>
</dbReference>
<dbReference type="GO" id="GO:0042802">
    <property type="term" value="F:identical protein binding"/>
    <property type="evidence" value="ECO:0007669"/>
    <property type="project" value="Ensembl"/>
</dbReference>
<dbReference type="GO" id="GO:0099507">
    <property type="term" value="F:ligand-gated monoatomic ion channel activity involved in regulation of presynaptic membrane potential"/>
    <property type="evidence" value="ECO:0000314"/>
    <property type="project" value="SynGO"/>
</dbReference>
<dbReference type="GO" id="GO:0019904">
    <property type="term" value="F:protein domain specific binding"/>
    <property type="evidence" value="ECO:0007669"/>
    <property type="project" value="Ensembl"/>
</dbReference>
<dbReference type="GO" id="GO:0044877">
    <property type="term" value="F:protein-containing complex binding"/>
    <property type="evidence" value="ECO:0007669"/>
    <property type="project" value="Ensembl"/>
</dbReference>
<dbReference type="GO" id="GO:0050804">
    <property type="term" value="P:modulation of chemical synaptic transmission"/>
    <property type="evidence" value="ECO:0000314"/>
    <property type="project" value="SynGO"/>
</dbReference>
<dbReference type="CDD" id="cd19005">
    <property type="entry name" value="LGIC_ECD_GABAAR_rho"/>
    <property type="match status" value="1"/>
</dbReference>
<dbReference type="CDD" id="cd19059">
    <property type="entry name" value="LGIC_TM_GABAAR_rho"/>
    <property type="match status" value="1"/>
</dbReference>
<dbReference type="FunFam" id="2.70.170.10:FF:000015">
    <property type="entry name" value="gamma-aminobutyric acid receptor subunit rho-1 isoform X1"/>
    <property type="match status" value="1"/>
</dbReference>
<dbReference type="FunFam" id="1.20.58.390:FF:000005">
    <property type="entry name" value="Putative gamma-aminobutyric acid receptor subunit rho-2-like"/>
    <property type="match status" value="1"/>
</dbReference>
<dbReference type="Gene3D" id="2.70.170.10">
    <property type="entry name" value="Neurotransmitter-gated ion-channel ligand-binding domain"/>
    <property type="match status" value="1"/>
</dbReference>
<dbReference type="Gene3D" id="1.20.58.390">
    <property type="entry name" value="Neurotransmitter-gated ion-channel transmembrane domain"/>
    <property type="match status" value="1"/>
</dbReference>
<dbReference type="InterPro" id="IPR006028">
    <property type="entry name" value="GABAA/Glycine_rcpt"/>
</dbReference>
<dbReference type="InterPro" id="IPR008058">
    <property type="entry name" value="GABAAa_rho1_rcpt"/>
</dbReference>
<dbReference type="InterPro" id="IPR008057">
    <property type="entry name" value="GABAAa_rho_rcpt"/>
</dbReference>
<dbReference type="InterPro" id="IPR006202">
    <property type="entry name" value="Neur_chan_lig-bd"/>
</dbReference>
<dbReference type="InterPro" id="IPR036734">
    <property type="entry name" value="Neur_chan_lig-bd_sf"/>
</dbReference>
<dbReference type="InterPro" id="IPR006201">
    <property type="entry name" value="Neur_channel"/>
</dbReference>
<dbReference type="InterPro" id="IPR036719">
    <property type="entry name" value="Neuro-gated_channel_TM_sf"/>
</dbReference>
<dbReference type="InterPro" id="IPR038050">
    <property type="entry name" value="Neuro_actylchol_rec"/>
</dbReference>
<dbReference type="InterPro" id="IPR006029">
    <property type="entry name" value="Neurotrans-gated_channel_TM"/>
</dbReference>
<dbReference type="InterPro" id="IPR018000">
    <property type="entry name" value="Neurotransmitter_ion_chnl_CS"/>
</dbReference>
<dbReference type="NCBIfam" id="TIGR00860">
    <property type="entry name" value="LIC"/>
    <property type="match status" value="1"/>
</dbReference>
<dbReference type="PANTHER" id="PTHR18945">
    <property type="entry name" value="NEUROTRANSMITTER GATED ION CHANNEL"/>
    <property type="match status" value="1"/>
</dbReference>
<dbReference type="Pfam" id="PF02931">
    <property type="entry name" value="Neur_chan_LBD"/>
    <property type="match status" value="1"/>
</dbReference>
<dbReference type="Pfam" id="PF02932">
    <property type="entry name" value="Neur_chan_memb"/>
    <property type="match status" value="1"/>
</dbReference>
<dbReference type="PRINTS" id="PR00253">
    <property type="entry name" value="GABAARECEPTR"/>
</dbReference>
<dbReference type="PRINTS" id="PR01670">
    <property type="entry name" value="GABAARRHO"/>
</dbReference>
<dbReference type="PRINTS" id="PR01671">
    <property type="entry name" value="GABAARRHO1"/>
</dbReference>
<dbReference type="PRINTS" id="PR00252">
    <property type="entry name" value="NRIONCHANNEL"/>
</dbReference>
<dbReference type="SUPFAM" id="SSF90112">
    <property type="entry name" value="Neurotransmitter-gated ion-channel transmembrane pore"/>
    <property type="match status" value="1"/>
</dbReference>
<dbReference type="SUPFAM" id="SSF63712">
    <property type="entry name" value="Nicotinic receptor ligand binding domain-like"/>
    <property type="match status" value="1"/>
</dbReference>
<dbReference type="PROSITE" id="PS00236">
    <property type="entry name" value="NEUROTR_ION_CHANNEL"/>
    <property type="match status" value="1"/>
</dbReference>
<protein>
    <recommendedName>
        <fullName evidence="7">Gamma-aminobutyric acid receptor subunit rho-1</fullName>
    </recommendedName>
    <alternativeName>
        <fullName>GABA(A) receptor subunit rho-1</fullName>
        <shortName evidence="1">GABAAR subunit rho-1</shortName>
    </alternativeName>
    <alternativeName>
        <fullName evidence="2">GABA(C) receptor</fullName>
    </alternativeName>
</protein>
<feature type="signal peptide" evidence="3">
    <location>
        <begin position="1"/>
        <end position="21"/>
    </location>
</feature>
<feature type="chain" id="PRO_0000000486" description="Gamma-aminobutyric acid receptor subunit rho-1" evidence="3">
    <location>
        <begin position="22"/>
        <end position="480"/>
    </location>
</feature>
<feature type="topological domain" description="Extracellular" evidence="8">
    <location>
        <begin position="22"/>
        <end position="281"/>
    </location>
</feature>
<feature type="transmembrane region" description="Helical" evidence="3">
    <location>
        <begin position="282"/>
        <end position="302"/>
    </location>
</feature>
<feature type="topological domain" description="Cytoplasmic" evidence="8">
    <location>
        <begin position="303"/>
        <end position="314"/>
    </location>
</feature>
<feature type="transmembrane region" description="Helical" evidence="3">
    <location>
        <begin position="315"/>
        <end position="335"/>
    </location>
</feature>
<feature type="topological domain" description="Extracellular" evidence="8">
    <location>
        <begin position="336"/>
        <end position="346"/>
    </location>
</feature>
<feature type="transmembrane region" description="Helical" evidence="3">
    <location>
        <begin position="347"/>
        <end position="367"/>
    </location>
</feature>
<feature type="topological domain" description="Cytoplasmic" evidence="8">
    <location>
        <begin position="368"/>
        <end position="458"/>
    </location>
</feature>
<feature type="transmembrane region" description="Helical" evidence="3">
    <location>
        <begin position="459"/>
        <end position="479"/>
    </location>
</feature>
<feature type="topological domain" description="Extracellular" evidence="8">
    <location>
        <position position="480"/>
    </location>
</feature>
<feature type="region of interest" description="Disordered" evidence="4">
    <location>
        <begin position="29"/>
        <end position="67"/>
    </location>
</feature>
<feature type="compositionally biased region" description="Basic and acidic residues" evidence="4">
    <location>
        <begin position="29"/>
        <end position="38"/>
    </location>
</feature>
<feature type="compositionally biased region" description="Basic residues" evidence="4">
    <location>
        <begin position="39"/>
        <end position="48"/>
    </location>
</feature>
<feature type="binding site" description="in chain A" evidence="1">
    <location>
        <position position="126"/>
    </location>
    <ligand>
        <name>4-aminobutanoate</name>
        <dbReference type="ChEBI" id="CHEBI:59888"/>
        <note>ligand shared between two neighboring rho subunits</note>
    </ligand>
</feature>
<feature type="binding site" description="in chain A" evidence="1">
    <location>
        <position position="190"/>
    </location>
    <ligand>
        <name>4-aminobutanoate</name>
        <dbReference type="ChEBI" id="CHEBI:59888"/>
        <note>ligand shared between two neighboring rho subunits</note>
    </ligand>
</feature>
<feature type="binding site" description="in chain B" evidence="1">
    <location>
        <position position="218"/>
    </location>
    <ligand>
        <name>4-aminobutanoate</name>
        <dbReference type="ChEBI" id="CHEBI:59888"/>
        <note>ligand shared between two neighboring rho subunits</note>
    </ligand>
</feature>
<feature type="glycosylation site" description="N-linked (GlcNAc...) asparagine" evidence="3">
    <location>
        <position position="141"/>
    </location>
</feature>
<feature type="glycosylation site" description="N-linked (GlcNAc...) asparagine" evidence="3">
    <location>
        <position position="235"/>
    </location>
</feature>
<feature type="glycosylation site" description="N-linked (GlcNAc...) asparagine" evidence="3">
    <location>
        <position position="275"/>
    </location>
</feature>
<feature type="disulfide bond" evidence="1">
    <location>
        <begin position="199"/>
        <end position="213"/>
    </location>
</feature>
<feature type="sequence conflict" description="In Ref. 1; AAB81964." evidence="8" ref="1">
    <original>M</original>
    <variation>L</variation>
    <location>
        <position position="414"/>
    </location>
</feature>